<accession>Q3SZJ9</accession>
<proteinExistence type="evidence at transcript level"/>
<name>PMM2_BOVIN</name>
<feature type="initiator methionine" description="Removed" evidence="2">
    <location>
        <position position="1"/>
    </location>
</feature>
<feature type="chain" id="PRO_0000239734" description="Phosphomannomutase 2">
    <location>
        <begin position="2"/>
        <end position="246"/>
    </location>
</feature>
<feature type="active site" description="Nucleophile" evidence="4">
    <location>
        <position position="12"/>
    </location>
</feature>
<feature type="active site" description="Proton donor/acceptor" evidence="4">
    <location>
        <position position="14"/>
    </location>
</feature>
<feature type="binding site" evidence="4">
    <location>
        <position position="12"/>
    </location>
    <ligand>
        <name>Mg(2+)</name>
        <dbReference type="ChEBI" id="CHEBI:18420"/>
        <label>1</label>
    </ligand>
</feature>
<feature type="binding site" evidence="4">
    <location>
        <position position="14"/>
    </location>
    <ligand>
        <name>Mg(2+)</name>
        <dbReference type="ChEBI" id="CHEBI:18420"/>
        <label>1</label>
    </ligand>
</feature>
<feature type="binding site" evidence="4">
    <location>
        <position position="21"/>
    </location>
    <ligand>
        <name>alpha-D-mannose 1-phosphate</name>
        <dbReference type="ChEBI" id="CHEBI:58409"/>
    </ligand>
</feature>
<feature type="binding site" evidence="4">
    <location>
        <position position="123"/>
    </location>
    <ligand>
        <name>alpha-D-mannose 1-phosphate</name>
        <dbReference type="ChEBI" id="CHEBI:58409"/>
    </ligand>
</feature>
<feature type="binding site" evidence="4">
    <location>
        <position position="134"/>
    </location>
    <ligand>
        <name>alpha-D-mannose 1-phosphate</name>
        <dbReference type="ChEBI" id="CHEBI:58409"/>
    </ligand>
</feature>
<feature type="binding site" evidence="4">
    <location>
        <position position="141"/>
    </location>
    <ligand>
        <name>alpha-D-mannose 1-phosphate</name>
        <dbReference type="ChEBI" id="CHEBI:58409"/>
    </ligand>
</feature>
<feature type="binding site" evidence="4">
    <location>
        <position position="179"/>
    </location>
    <ligand>
        <name>alpha-D-mannose 1-phosphate</name>
        <dbReference type="ChEBI" id="CHEBI:58409"/>
    </ligand>
</feature>
<feature type="binding site" evidence="4">
    <location>
        <position position="181"/>
    </location>
    <ligand>
        <name>alpha-D-mannose 1-phosphate</name>
        <dbReference type="ChEBI" id="CHEBI:58409"/>
    </ligand>
</feature>
<feature type="binding site" evidence="3">
    <location>
        <position position="209"/>
    </location>
    <ligand>
        <name>Mg(2+)</name>
        <dbReference type="ChEBI" id="CHEBI:18420"/>
        <label>1</label>
    </ligand>
</feature>
<feature type="binding site" evidence="4">
    <location>
        <position position="221"/>
    </location>
    <ligand>
        <name>Mg(2+)</name>
        <dbReference type="ChEBI" id="CHEBI:18420"/>
        <label>2</label>
    </ligand>
</feature>
<feature type="binding site" evidence="4">
    <location>
        <position position="223"/>
    </location>
    <ligand>
        <name>Mg(2+)</name>
        <dbReference type="ChEBI" id="CHEBI:18420"/>
        <label>2</label>
    </ligand>
</feature>
<feature type="binding site" evidence="4">
    <location>
        <position position="226"/>
    </location>
    <ligand>
        <name>Mg(2+)</name>
        <dbReference type="ChEBI" id="CHEBI:18420"/>
        <label>2</label>
    </ligand>
</feature>
<feature type="modified residue" description="N-acetylalanine" evidence="2">
    <location>
        <position position="2"/>
    </location>
</feature>
<comment type="function">
    <text evidence="1">Involved in the synthesis of the GDP-mannose and dolichol-phosphate-mannose required for a number of critical mannosyl transfer reactions.</text>
</comment>
<comment type="catalytic activity">
    <reaction>
        <text>alpha-D-mannose 1-phosphate = D-mannose 6-phosphate</text>
        <dbReference type="Rhea" id="RHEA:11140"/>
        <dbReference type="ChEBI" id="CHEBI:58409"/>
        <dbReference type="ChEBI" id="CHEBI:58735"/>
        <dbReference type="EC" id="5.4.2.8"/>
    </reaction>
</comment>
<comment type="pathway">
    <text>Nucleotide-sugar biosynthesis; GDP-alpha-D-mannose biosynthesis; alpha-D-mannose 1-phosphate from D-fructose 6-phosphate: step 2/2.</text>
</comment>
<comment type="subunit">
    <text evidence="1">Homodimer.</text>
</comment>
<comment type="subcellular location">
    <subcellularLocation>
        <location evidence="1">Cytoplasm</location>
    </subcellularLocation>
</comment>
<comment type="similarity">
    <text evidence="5">Belongs to the eukaryotic PMM family.</text>
</comment>
<gene>
    <name type="primary">PMM2</name>
</gene>
<keyword id="KW-0007">Acetylation</keyword>
<keyword id="KW-0963">Cytoplasm</keyword>
<keyword id="KW-0413">Isomerase</keyword>
<keyword id="KW-0460">Magnesium</keyword>
<keyword id="KW-0479">Metal-binding</keyword>
<keyword id="KW-1185">Reference proteome</keyword>
<sequence>MAAPGPALCLFDVDGTLTAPRQKITKDMDCFLQKLRQKIKIGVVGGSDFEKVQEQLGDDVIKKYDYVFPENGLVAYRDGKLLCKQNIQGHLGEALIQDLINYCLSYIAKIKLPKKRGTFIEFRNGMLNVSPIGRSCSQEERIEFYELDQKENIRQKFVEDLRKEFAGKGLTFSIGGQISFDVFPDGWDKRYCLGHVEKDGYKTIYFFGDKTMPGGNDHEIFTDPRTVGYTVAAPEDTRRICEELFC</sequence>
<evidence type="ECO:0000250" key="1"/>
<evidence type="ECO:0000250" key="2">
    <source>
        <dbReference type="UniProtKB" id="O15305"/>
    </source>
</evidence>
<evidence type="ECO:0000250" key="3">
    <source>
        <dbReference type="UniProtKB" id="P31353"/>
    </source>
</evidence>
<evidence type="ECO:0000250" key="4">
    <source>
        <dbReference type="UniProtKB" id="Q92871"/>
    </source>
</evidence>
<evidence type="ECO:0000305" key="5"/>
<organism>
    <name type="scientific">Bos taurus</name>
    <name type="common">Bovine</name>
    <dbReference type="NCBI Taxonomy" id="9913"/>
    <lineage>
        <taxon>Eukaryota</taxon>
        <taxon>Metazoa</taxon>
        <taxon>Chordata</taxon>
        <taxon>Craniata</taxon>
        <taxon>Vertebrata</taxon>
        <taxon>Euteleostomi</taxon>
        <taxon>Mammalia</taxon>
        <taxon>Eutheria</taxon>
        <taxon>Laurasiatheria</taxon>
        <taxon>Artiodactyla</taxon>
        <taxon>Ruminantia</taxon>
        <taxon>Pecora</taxon>
        <taxon>Bovidae</taxon>
        <taxon>Bovinae</taxon>
        <taxon>Bos</taxon>
    </lineage>
</organism>
<protein>
    <recommendedName>
        <fullName>Phosphomannomutase 2</fullName>
        <shortName>PMM 2</shortName>
        <ecNumber>5.4.2.8</ecNumber>
    </recommendedName>
</protein>
<reference key="1">
    <citation type="submission" date="2005-08" db="EMBL/GenBank/DDBJ databases">
        <authorList>
            <consortium name="NIH - Mammalian Gene Collection (MGC) project"/>
        </authorList>
    </citation>
    <scope>NUCLEOTIDE SEQUENCE [LARGE SCALE MRNA]</scope>
    <source>
        <strain>Crossbred X Angus</strain>
        <tissue>Ileum</tissue>
    </source>
</reference>
<dbReference type="EC" id="5.4.2.8"/>
<dbReference type="EMBL" id="BC102817">
    <property type="protein sequence ID" value="AAI02818.1"/>
    <property type="molecule type" value="mRNA"/>
</dbReference>
<dbReference type="RefSeq" id="NP_001030267.1">
    <property type="nucleotide sequence ID" value="NM_001035095.2"/>
</dbReference>
<dbReference type="SMR" id="Q3SZJ9"/>
<dbReference type="FunCoup" id="Q3SZJ9">
    <property type="interactions" value="2674"/>
</dbReference>
<dbReference type="STRING" id="9913.ENSBTAP00000001888"/>
<dbReference type="CarbonylDB" id="Q3SZJ9"/>
<dbReference type="PaxDb" id="9913-ENSBTAP00000001888"/>
<dbReference type="Ensembl" id="ENSBTAT00000001888.4">
    <property type="protein sequence ID" value="ENSBTAP00000001888.3"/>
    <property type="gene ID" value="ENSBTAG00000001440.5"/>
</dbReference>
<dbReference type="GeneID" id="510978"/>
<dbReference type="KEGG" id="bta:510978"/>
<dbReference type="CTD" id="5373"/>
<dbReference type="VEuPathDB" id="HostDB:ENSBTAG00000001440"/>
<dbReference type="VGNC" id="VGNC:33073">
    <property type="gene designation" value="PMM2"/>
</dbReference>
<dbReference type="eggNOG" id="KOG3189">
    <property type="taxonomic scope" value="Eukaryota"/>
</dbReference>
<dbReference type="GeneTree" id="ENSGT00390000002918"/>
<dbReference type="HOGENOM" id="CLU_065642_0_0_1"/>
<dbReference type="InParanoid" id="Q3SZJ9"/>
<dbReference type="OMA" id="ISHRVYT"/>
<dbReference type="OrthoDB" id="10264771at2759"/>
<dbReference type="TreeFam" id="TF300874"/>
<dbReference type="Reactome" id="R-BTA-446205">
    <property type="pathway name" value="Synthesis of GDP-mannose"/>
</dbReference>
<dbReference type="UniPathway" id="UPA00126">
    <property type="reaction ID" value="UER00424"/>
</dbReference>
<dbReference type="Proteomes" id="UP000009136">
    <property type="component" value="Chromosome 25"/>
</dbReference>
<dbReference type="Bgee" id="ENSBTAG00000001440">
    <property type="expression patterns" value="Expressed in ascending colon and 105 other cell types or tissues"/>
</dbReference>
<dbReference type="GO" id="GO:0005829">
    <property type="term" value="C:cytosol"/>
    <property type="evidence" value="ECO:0000318"/>
    <property type="project" value="GO_Central"/>
</dbReference>
<dbReference type="GO" id="GO:0046872">
    <property type="term" value="F:metal ion binding"/>
    <property type="evidence" value="ECO:0007669"/>
    <property type="project" value="UniProtKB-KW"/>
</dbReference>
<dbReference type="GO" id="GO:0004615">
    <property type="term" value="F:phosphomannomutase activity"/>
    <property type="evidence" value="ECO:0000318"/>
    <property type="project" value="GO_Central"/>
</dbReference>
<dbReference type="GO" id="GO:0009298">
    <property type="term" value="P:GDP-mannose biosynthetic process"/>
    <property type="evidence" value="ECO:0007669"/>
    <property type="project" value="UniProtKB-UniPathway"/>
</dbReference>
<dbReference type="GO" id="GO:0006013">
    <property type="term" value="P:mannose metabolic process"/>
    <property type="evidence" value="ECO:0000318"/>
    <property type="project" value="GO_Central"/>
</dbReference>
<dbReference type="GO" id="GO:0006487">
    <property type="term" value="P:protein N-linked glycosylation"/>
    <property type="evidence" value="ECO:0000318"/>
    <property type="project" value="GO_Central"/>
</dbReference>
<dbReference type="CDD" id="cd02585">
    <property type="entry name" value="HAD_PMM"/>
    <property type="match status" value="1"/>
</dbReference>
<dbReference type="FunFam" id="3.30.1240.20:FF:000001">
    <property type="entry name" value="Phosphomannomutase"/>
    <property type="match status" value="1"/>
</dbReference>
<dbReference type="FunFam" id="3.40.50.1000:FF:000216">
    <property type="entry name" value="Phosphomannomutase"/>
    <property type="match status" value="2"/>
</dbReference>
<dbReference type="Gene3D" id="3.30.1240.20">
    <property type="match status" value="1"/>
</dbReference>
<dbReference type="Gene3D" id="3.40.50.1000">
    <property type="entry name" value="HAD superfamily/HAD-like"/>
    <property type="match status" value="1"/>
</dbReference>
<dbReference type="InterPro" id="IPR036412">
    <property type="entry name" value="HAD-like_sf"/>
</dbReference>
<dbReference type="InterPro" id="IPR006379">
    <property type="entry name" value="HAD-SF_hydro_IIB"/>
</dbReference>
<dbReference type="InterPro" id="IPR023214">
    <property type="entry name" value="HAD_sf"/>
</dbReference>
<dbReference type="InterPro" id="IPR005002">
    <property type="entry name" value="PMM"/>
</dbReference>
<dbReference type="InterPro" id="IPR043169">
    <property type="entry name" value="PMM_cap"/>
</dbReference>
<dbReference type="NCBIfam" id="TIGR01484">
    <property type="entry name" value="HAD-SF-IIB"/>
    <property type="match status" value="1"/>
</dbReference>
<dbReference type="PANTHER" id="PTHR10466">
    <property type="entry name" value="PHOSPHOMANNOMUTASE"/>
    <property type="match status" value="1"/>
</dbReference>
<dbReference type="PANTHER" id="PTHR10466:SF2">
    <property type="entry name" value="PHOSPHOMANNOMUTASE 2"/>
    <property type="match status" value="1"/>
</dbReference>
<dbReference type="Pfam" id="PF03332">
    <property type="entry name" value="PMM"/>
    <property type="match status" value="1"/>
</dbReference>
<dbReference type="SFLD" id="SFLDF00445">
    <property type="entry name" value="alpha-phosphomannomutase"/>
    <property type="match status" value="1"/>
</dbReference>
<dbReference type="SFLD" id="SFLDS00003">
    <property type="entry name" value="Haloacid_Dehalogenase"/>
    <property type="match status" value="1"/>
</dbReference>
<dbReference type="SUPFAM" id="SSF56784">
    <property type="entry name" value="HAD-like"/>
    <property type="match status" value="1"/>
</dbReference>